<accession>P85581</accession>
<protein>
    <recommendedName>
        <fullName evidence="3">Periviscerokinin-2</fullName>
        <shortName evidence="3">DerCr-PVK-2</shortName>
    </recommendedName>
</protein>
<organism>
    <name type="scientific">Derocalymma cruralis</name>
    <name type="common">African cockroach</name>
    <dbReference type="NCBI Taxonomy" id="344972"/>
    <lineage>
        <taxon>Eukaryota</taxon>
        <taxon>Metazoa</taxon>
        <taxon>Ecdysozoa</taxon>
        <taxon>Arthropoda</taxon>
        <taxon>Hexapoda</taxon>
        <taxon>Insecta</taxon>
        <taxon>Pterygota</taxon>
        <taxon>Neoptera</taxon>
        <taxon>Polyneoptera</taxon>
        <taxon>Dictyoptera</taxon>
        <taxon>Blattodea</taxon>
        <taxon>Blaberoidea</taxon>
        <taxon>Blaberidae</taxon>
        <taxon>Perisphaerinae</taxon>
        <taxon>Derocalymma</taxon>
    </lineage>
</organism>
<reference evidence="4" key="1">
    <citation type="journal article" date="2009" name="BMC Evol. Biol.">
        <title>A proteomic approach for studying insect phylogeny: CAPA peptides of ancient insect taxa (Dictyoptera, Blattoptera) as a test case.</title>
        <authorList>
            <person name="Roth S."/>
            <person name="Fromm B."/>
            <person name="Gaede G."/>
            <person name="Predel R."/>
        </authorList>
    </citation>
    <scope>PROTEIN SEQUENCE</scope>
    <scope>AMIDATION AT THR-12</scope>
    <source>
        <tissue evidence="2">Abdominal perisympathetic organs</tissue>
    </source>
</reference>
<dbReference type="GO" id="GO:0005576">
    <property type="term" value="C:extracellular region"/>
    <property type="evidence" value="ECO:0007669"/>
    <property type="project" value="UniProtKB-SubCell"/>
</dbReference>
<dbReference type="GO" id="GO:0007218">
    <property type="term" value="P:neuropeptide signaling pathway"/>
    <property type="evidence" value="ECO:0007669"/>
    <property type="project" value="UniProtKB-KW"/>
</dbReference>
<dbReference type="InterPro" id="IPR013231">
    <property type="entry name" value="Periviscerokinin"/>
</dbReference>
<dbReference type="Pfam" id="PF08259">
    <property type="entry name" value="Periviscerokin"/>
    <property type="match status" value="1"/>
</dbReference>
<feature type="peptide" id="PRO_0000378782" description="Periviscerokinin-2" evidence="2">
    <location>
        <begin position="1"/>
        <end position="12"/>
    </location>
</feature>
<feature type="modified residue" description="Threonine amide" evidence="2">
    <location>
        <position position="12"/>
    </location>
</feature>
<comment type="function">
    <text evidence="4">Mediates visceral muscle contractile activity (myotropic activity).</text>
</comment>
<comment type="subcellular location">
    <subcellularLocation>
        <location evidence="4">Secreted</location>
    </subcellularLocation>
</comment>
<comment type="similarity">
    <text evidence="1">Belongs to the periviscerokinin family.</text>
</comment>
<keyword id="KW-0027">Amidation</keyword>
<keyword id="KW-0903">Direct protein sequencing</keyword>
<keyword id="KW-0527">Neuropeptide</keyword>
<keyword id="KW-0964">Secreted</keyword>
<name>PVK2_DERCR</name>
<sequence length="12" mass="1232">GSLTGLISMPRT</sequence>
<evidence type="ECO:0000255" key="1"/>
<evidence type="ECO:0000269" key="2">
    <source>
    </source>
</evidence>
<evidence type="ECO:0000303" key="3">
    <source>
    </source>
</evidence>
<evidence type="ECO:0000305" key="4"/>
<proteinExistence type="evidence at protein level"/>